<sequence>MIQVLLVTLCLAAFPYQGSSIILDSGNVNDYEVVYPRKVTALPKGAVQPKYEDTMQYEFKVNGEPVVLHLEKNKGLFSEDYSETHYSPDGREITTYPSIEDHCYYRGRIQNDADSTASISACNGLKGHFKLQGEMYLIEPLKLPDSEAHAVYKYENIEKEDEAPKMCGVTQTNWKSDEPIKKASQLVVTPEEQRYLNTKKYIELVIVADNVMVKKYTSNSTAIRTRIYACVNTLNLIYRAFNIYIALIGLEIWSNRDLINVQSASSVTLDLFGTWRETVLLRHKRHDNAQLLTGINFDGDTVGLAYVGSMCDPKRSAGIIQDHNKLDVMVAIAMAHELGHDLGINHDGNQCNCGGNPCIMSATLNFEPVYRFSDCSRDEHWRYLIDNRPPCILNKPSITDIVSPPVCGNYFVEVGEECDCGLPAHCQNPCCDAATCKLRPETQCEDGECCEQCQFTRAGTECRAARSECDIAESCTGQSAECPTDDFQRNGQPCLNNNGYCYNGTCPILTNQCISFFGSSATVAPDVCFDFNLQGQGNFYCRRERARIFPCAPQDKKCGRLFCVKGPIGNTISCQSTSSQSDLDIGMVDLGTKCGDGRVCNSNRQCVDVNTAY</sequence>
<reference key="1">
    <citation type="journal article" date="2010" name="Toxicon">
        <title>Molecular cloning and characterization of cDNAs encoding metalloproteinases from snake venom glands.</title>
        <authorList>
            <person name="Jia Y."/>
            <person name="Perez J.C."/>
        </authorList>
    </citation>
    <scope>NUCLEOTIDE SEQUENCE [MRNA]</scope>
    <source>
        <tissue>Venom gland</tissue>
    </source>
</reference>
<name>VM3V3_AGKPL</name>
<organism>
    <name type="scientific">Agkistrodon piscivorus leucostoma</name>
    <name type="common">Western cottonmouth</name>
    <name type="synonym">Acontias leucostoma</name>
    <dbReference type="NCBI Taxonomy" id="459671"/>
    <lineage>
        <taxon>Eukaryota</taxon>
        <taxon>Metazoa</taxon>
        <taxon>Chordata</taxon>
        <taxon>Craniata</taxon>
        <taxon>Vertebrata</taxon>
        <taxon>Euteleostomi</taxon>
        <taxon>Lepidosauria</taxon>
        <taxon>Squamata</taxon>
        <taxon>Bifurcata</taxon>
        <taxon>Unidentata</taxon>
        <taxon>Episquamata</taxon>
        <taxon>Toxicofera</taxon>
        <taxon>Serpentes</taxon>
        <taxon>Colubroidea</taxon>
        <taxon>Viperidae</taxon>
        <taxon>Crotalinae</taxon>
        <taxon>Agkistrodon</taxon>
    </lineage>
</organism>
<accession>C9E1S0</accession>
<protein>
    <recommendedName>
        <fullName>Zinc metalloproteinase-disintegrin-like VMP-III</fullName>
        <shortName>AplVMP-III</shortName>
        <ecNumber>3.4.24.-</ecNumber>
    </recommendedName>
    <alternativeName>
        <fullName>Snake venom metalloproteinase</fullName>
        <shortName>SVMP</shortName>
    </alternativeName>
</protein>
<comment type="function">
    <text evidence="1">Snake venom metalloproteinase that impairs hemostasis in the envenomed animal.</text>
</comment>
<comment type="cofactor">
    <cofactor evidence="1">
        <name>Zn(2+)</name>
        <dbReference type="ChEBI" id="CHEBI:29105"/>
    </cofactor>
    <text evidence="1">Binds 1 zinc ion per subunit.</text>
</comment>
<comment type="subunit">
    <text evidence="1">Monomer.</text>
</comment>
<comment type="subcellular location">
    <subcellularLocation>
        <location evidence="1">Secreted</location>
    </subcellularLocation>
</comment>
<comment type="tissue specificity">
    <text>Expressed by the venom gland.</text>
</comment>
<comment type="miscellaneous">
    <text>The disintegrin domain belongs to the long disintegrin subfamily.</text>
</comment>
<comment type="similarity">
    <text evidence="6">Belongs to the venom metalloproteinase (M12B) family. P-III subfamily. P-IIIa sub-subfamily.</text>
</comment>
<feature type="signal peptide" evidence="2">
    <location>
        <begin position="1"/>
        <end position="20"/>
    </location>
</feature>
<feature type="propeptide" id="PRO_0000407752" evidence="1">
    <location>
        <begin position="21"/>
        <end position="190"/>
    </location>
</feature>
<feature type="chain" id="PRO_0000407753" description="Zinc metalloproteinase-disintegrin-like VMP-III">
    <location>
        <begin position="191"/>
        <end position="613"/>
    </location>
</feature>
<feature type="domain" description="Peptidase M12B" evidence="4">
    <location>
        <begin position="200"/>
        <end position="396"/>
    </location>
</feature>
<feature type="domain" description="Disintegrin" evidence="3">
    <location>
        <begin position="404"/>
        <end position="490"/>
    </location>
</feature>
<feature type="short sequence motif" description="D/ECD-tripeptide">
    <location>
        <begin position="468"/>
        <end position="470"/>
    </location>
</feature>
<feature type="active site" evidence="4 5">
    <location>
        <position position="337"/>
    </location>
</feature>
<feature type="binding site" evidence="1">
    <location>
        <position position="203"/>
    </location>
    <ligand>
        <name>Ca(2+)</name>
        <dbReference type="ChEBI" id="CHEBI:29108"/>
        <label>1</label>
    </ligand>
</feature>
<feature type="binding site" evidence="1">
    <location>
        <position position="287"/>
    </location>
    <ligand>
        <name>Ca(2+)</name>
        <dbReference type="ChEBI" id="CHEBI:29108"/>
        <label>1</label>
    </ligand>
</feature>
<feature type="binding site" evidence="1">
    <location>
        <position position="336"/>
    </location>
    <ligand>
        <name>Zn(2+)</name>
        <dbReference type="ChEBI" id="CHEBI:29105"/>
        <note>catalytic</note>
    </ligand>
</feature>
<feature type="binding site" evidence="1">
    <location>
        <position position="340"/>
    </location>
    <ligand>
        <name>Zn(2+)</name>
        <dbReference type="ChEBI" id="CHEBI:29105"/>
        <note>catalytic</note>
    </ligand>
</feature>
<feature type="binding site" evidence="1">
    <location>
        <position position="346"/>
    </location>
    <ligand>
        <name>Zn(2+)</name>
        <dbReference type="ChEBI" id="CHEBI:29105"/>
        <note>catalytic</note>
    </ligand>
</feature>
<feature type="binding site" evidence="1">
    <location>
        <position position="391"/>
    </location>
    <ligand>
        <name>Ca(2+)</name>
        <dbReference type="ChEBI" id="CHEBI:29108"/>
        <label>1</label>
    </ligand>
</feature>
<feature type="binding site" evidence="1">
    <location>
        <position position="394"/>
    </location>
    <ligand>
        <name>Ca(2+)</name>
        <dbReference type="ChEBI" id="CHEBI:29108"/>
        <label>1</label>
    </ligand>
</feature>
<feature type="binding site" evidence="1">
    <location>
        <position position="406"/>
    </location>
    <ligand>
        <name>Ca(2+)</name>
        <dbReference type="ChEBI" id="CHEBI:29108"/>
        <label>2</label>
    </ligand>
</feature>
<feature type="binding site" evidence="1">
    <location>
        <position position="409"/>
    </location>
    <ligand>
        <name>Ca(2+)</name>
        <dbReference type="ChEBI" id="CHEBI:29108"/>
        <label>2</label>
    </ligand>
</feature>
<feature type="binding site" evidence="1">
    <location>
        <position position="411"/>
    </location>
    <ligand>
        <name>Ca(2+)</name>
        <dbReference type="ChEBI" id="CHEBI:29108"/>
        <label>2</label>
    </ligand>
</feature>
<feature type="binding site" evidence="1">
    <location>
        <position position="413"/>
    </location>
    <ligand>
        <name>Ca(2+)</name>
        <dbReference type="ChEBI" id="CHEBI:29108"/>
        <label>2</label>
    </ligand>
</feature>
<feature type="binding site" evidence="1">
    <location>
        <position position="416"/>
    </location>
    <ligand>
        <name>Ca(2+)</name>
        <dbReference type="ChEBI" id="CHEBI:29108"/>
        <label>2</label>
    </ligand>
</feature>
<feature type="binding site" evidence="1">
    <location>
        <position position="419"/>
    </location>
    <ligand>
        <name>Ca(2+)</name>
        <dbReference type="ChEBI" id="CHEBI:29108"/>
        <label>2</label>
    </ligand>
</feature>
<feature type="glycosylation site" description="N-linked (GlcNAc...) asparagine" evidence="2">
    <location>
        <position position="219"/>
    </location>
</feature>
<feature type="glycosylation site" description="N-linked (GlcNAc...) asparagine" evidence="2">
    <location>
        <position position="503"/>
    </location>
</feature>
<feature type="disulfide bond" evidence="1">
    <location>
        <begin position="311"/>
        <end position="391"/>
    </location>
</feature>
<feature type="disulfide bond" evidence="1">
    <location>
        <begin position="351"/>
        <end position="375"/>
    </location>
</feature>
<feature type="disulfide bond" evidence="1">
    <location>
        <begin position="353"/>
        <end position="358"/>
    </location>
</feature>
<feature type="disulfide bond" evidence="1">
    <location>
        <begin position="407"/>
        <end position="436"/>
    </location>
</feature>
<feature type="disulfide bond" evidence="1">
    <location>
        <begin position="418"/>
        <end position="431"/>
    </location>
</feature>
<feature type="disulfide bond" evidence="1">
    <location>
        <begin position="420"/>
        <end position="426"/>
    </location>
</feature>
<feature type="disulfide bond" evidence="1">
    <location>
        <begin position="430"/>
        <end position="453"/>
    </location>
</feature>
<feature type="disulfide bond" evidence="1">
    <location>
        <begin position="444"/>
        <end position="450"/>
    </location>
</feature>
<feature type="disulfide bond" evidence="1">
    <location>
        <begin position="449"/>
        <end position="475"/>
    </location>
</feature>
<feature type="disulfide bond" evidence="1">
    <location>
        <begin position="462"/>
        <end position="482"/>
    </location>
</feature>
<feature type="disulfide bond" evidence="1">
    <location>
        <begin position="469"/>
        <end position="501"/>
    </location>
</feature>
<feature type="disulfide bond" evidence="1">
    <location>
        <begin position="494"/>
        <end position="506"/>
    </location>
</feature>
<feature type="disulfide bond" evidence="1">
    <location>
        <begin position="513"/>
        <end position="563"/>
    </location>
</feature>
<feature type="disulfide bond" evidence="1">
    <location>
        <begin position="528"/>
        <end position="574"/>
    </location>
</feature>
<feature type="disulfide bond" evidence="1">
    <location>
        <begin position="541"/>
        <end position="551"/>
    </location>
</feature>
<feature type="disulfide bond" evidence="1">
    <location>
        <begin position="558"/>
        <end position="600"/>
    </location>
</feature>
<feature type="disulfide bond" evidence="1">
    <location>
        <begin position="594"/>
        <end position="606"/>
    </location>
</feature>
<dbReference type="EC" id="3.4.24.-"/>
<dbReference type="EMBL" id="GQ451441">
    <property type="protein sequence ID" value="ACV83935.1"/>
    <property type="molecule type" value="mRNA"/>
</dbReference>
<dbReference type="SMR" id="C9E1S0"/>
<dbReference type="GO" id="GO:0005576">
    <property type="term" value="C:extracellular region"/>
    <property type="evidence" value="ECO:0007669"/>
    <property type="project" value="UniProtKB-SubCell"/>
</dbReference>
<dbReference type="GO" id="GO:0005886">
    <property type="term" value="C:plasma membrane"/>
    <property type="evidence" value="ECO:0007669"/>
    <property type="project" value="TreeGrafter"/>
</dbReference>
<dbReference type="GO" id="GO:0046872">
    <property type="term" value="F:metal ion binding"/>
    <property type="evidence" value="ECO:0007669"/>
    <property type="project" value="UniProtKB-KW"/>
</dbReference>
<dbReference type="GO" id="GO:0004222">
    <property type="term" value="F:metalloendopeptidase activity"/>
    <property type="evidence" value="ECO:0007669"/>
    <property type="project" value="InterPro"/>
</dbReference>
<dbReference type="GO" id="GO:0090729">
    <property type="term" value="F:toxin activity"/>
    <property type="evidence" value="ECO:0007669"/>
    <property type="project" value="UniProtKB-KW"/>
</dbReference>
<dbReference type="GO" id="GO:0006508">
    <property type="term" value="P:proteolysis"/>
    <property type="evidence" value="ECO:0007669"/>
    <property type="project" value="UniProtKB-KW"/>
</dbReference>
<dbReference type="CDD" id="cd04269">
    <property type="entry name" value="ZnMc_adamalysin_II_like"/>
    <property type="match status" value="1"/>
</dbReference>
<dbReference type="FunFam" id="3.40.390.10:FF:000002">
    <property type="entry name" value="Disintegrin and metalloproteinase domain-containing protein 22"/>
    <property type="match status" value="1"/>
</dbReference>
<dbReference type="FunFam" id="4.10.70.10:FF:000001">
    <property type="entry name" value="Disintegrin and metalloproteinase domain-containing protein 22"/>
    <property type="match status" value="1"/>
</dbReference>
<dbReference type="Gene3D" id="3.40.390.10">
    <property type="entry name" value="Collagenase (Catalytic Domain)"/>
    <property type="match status" value="1"/>
</dbReference>
<dbReference type="Gene3D" id="4.10.70.10">
    <property type="entry name" value="Disintegrin domain"/>
    <property type="match status" value="1"/>
</dbReference>
<dbReference type="InterPro" id="IPR006586">
    <property type="entry name" value="ADAM_Cys-rich"/>
</dbReference>
<dbReference type="InterPro" id="IPR018358">
    <property type="entry name" value="Disintegrin_CS"/>
</dbReference>
<dbReference type="InterPro" id="IPR001762">
    <property type="entry name" value="Disintegrin_dom"/>
</dbReference>
<dbReference type="InterPro" id="IPR036436">
    <property type="entry name" value="Disintegrin_dom_sf"/>
</dbReference>
<dbReference type="InterPro" id="IPR024079">
    <property type="entry name" value="MetalloPept_cat_dom_sf"/>
</dbReference>
<dbReference type="InterPro" id="IPR001590">
    <property type="entry name" value="Peptidase_M12B"/>
</dbReference>
<dbReference type="InterPro" id="IPR002870">
    <property type="entry name" value="Peptidase_M12B_N"/>
</dbReference>
<dbReference type="InterPro" id="IPR034027">
    <property type="entry name" value="Reprolysin_adamalysin"/>
</dbReference>
<dbReference type="PANTHER" id="PTHR11905">
    <property type="entry name" value="ADAM A DISINTEGRIN AND METALLOPROTEASE DOMAIN"/>
    <property type="match status" value="1"/>
</dbReference>
<dbReference type="PANTHER" id="PTHR11905:SF32">
    <property type="entry name" value="DISINTEGRIN AND METALLOPROTEINASE DOMAIN-CONTAINING PROTEIN 28"/>
    <property type="match status" value="1"/>
</dbReference>
<dbReference type="Pfam" id="PF08516">
    <property type="entry name" value="ADAM_CR"/>
    <property type="match status" value="1"/>
</dbReference>
<dbReference type="Pfam" id="PF00200">
    <property type="entry name" value="Disintegrin"/>
    <property type="match status" value="1"/>
</dbReference>
<dbReference type="Pfam" id="PF01562">
    <property type="entry name" value="Pep_M12B_propep"/>
    <property type="match status" value="1"/>
</dbReference>
<dbReference type="Pfam" id="PF01421">
    <property type="entry name" value="Reprolysin"/>
    <property type="match status" value="1"/>
</dbReference>
<dbReference type="PRINTS" id="PR00289">
    <property type="entry name" value="DISINTEGRIN"/>
</dbReference>
<dbReference type="SMART" id="SM00608">
    <property type="entry name" value="ACR"/>
    <property type="match status" value="1"/>
</dbReference>
<dbReference type="SMART" id="SM00050">
    <property type="entry name" value="DISIN"/>
    <property type="match status" value="1"/>
</dbReference>
<dbReference type="SUPFAM" id="SSF57552">
    <property type="entry name" value="Blood coagulation inhibitor (disintegrin)"/>
    <property type="match status" value="1"/>
</dbReference>
<dbReference type="SUPFAM" id="SSF55486">
    <property type="entry name" value="Metalloproteases ('zincins'), catalytic domain"/>
    <property type="match status" value="1"/>
</dbReference>
<dbReference type="PROSITE" id="PS50215">
    <property type="entry name" value="ADAM_MEPRO"/>
    <property type="match status" value="1"/>
</dbReference>
<dbReference type="PROSITE" id="PS00427">
    <property type="entry name" value="DISINTEGRIN_1"/>
    <property type="match status" value="1"/>
</dbReference>
<dbReference type="PROSITE" id="PS50214">
    <property type="entry name" value="DISINTEGRIN_2"/>
    <property type="match status" value="1"/>
</dbReference>
<dbReference type="PROSITE" id="PS00142">
    <property type="entry name" value="ZINC_PROTEASE"/>
    <property type="match status" value="1"/>
</dbReference>
<evidence type="ECO:0000250" key="1"/>
<evidence type="ECO:0000255" key="2"/>
<evidence type="ECO:0000255" key="3">
    <source>
        <dbReference type="PROSITE-ProRule" id="PRU00068"/>
    </source>
</evidence>
<evidence type="ECO:0000255" key="4">
    <source>
        <dbReference type="PROSITE-ProRule" id="PRU00276"/>
    </source>
</evidence>
<evidence type="ECO:0000255" key="5">
    <source>
        <dbReference type="PROSITE-ProRule" id="PRU10095"/>
    </source>
</evidence>
<evidence type="ECO:0000305" key="6"/>
<proteinExistence type="evidence at transcript level"/>
<keyword id="KW-0106">Calcium</keyword>
<keyword id="KW-1217">Cell adhesion impairing toxin</keyword>
<keyword id="KW-1015">Disulfide bond</keyword>
<keyword id="KW-0325">Glycoprotein</keyword>
<keyword id="KW-1199">Hemostasis impairing toxin</keyword>
<keyword id="KW-0378">Hydrolase</keyword>
<keyword id="KW-0479">Metal-binding</keyword>
<keyword id="KW-0482">Metalloprotease</keyword>
<keyword id="KW-0645">Protease</keyword>
<keyword id="KW-0964">Secreted</keyword>
<keyword id="KW-0732">Signal</keyword>
<keyword id="KW-0800">Toxin</keyword>
<keyword id="KW-0862">Zinc</keyword>
<keyword id="KW-0865">Zymogen</keyword>